<sequence>MPMSSFKRKIKAIQIKIASPDVIRSWSGGEVKKPETINYRTFKPERDGLFCERIFGPVKDYECACGKYKGKKYEGTVCERCGVRVESREARRKRMGHIELAAPAVHIWYLESIPSVLGTLLNMNVSDLENIIYYGSRRVIERAFIVTDPKDTPFAQGDIIYETEYRIYRKKWDFEVEQAFIVKNPRSPVLSDIDGEVILRTEKTVTGREITWIIVRNVNRAEHTVLPGMIITVKDGQEVEKGQDLTREMNVDPLYAPFDGHVEIDEISNTITVKPLTTSKDQPVVFTVPYGARVLVSNGQKVKKGDQLTTSTTLPAVKASISGRVKFGSNLNVRALEDGNFEVLSSGNVYIEQVIEERKYPVFEGALVYVNNGDQVKKGDHLADRFLFEEEYLSSTEYKIFESHYPTMFDVEERTENDRPIVVITDIDPEVSKETGLKMGDIITENEYEAYLQIYPEKIVADAGAQAIKKLLQNLDLEELRAELEAELKKLPASSSKAMKLRRRLKMVKDFIKSGNKPEWMVLEVVPVIPPDLRPMIQIEGGRFATTDLNELYRRLINRNNRLRKLLELGAPEIILRNEKRMLQEAVDALIHNGSDSEGKRSRRAVLKDRNGRPLKSLTDLLKGKKGRFRRNLLGKRVDYSGRAVIVVGPHLKIHQCGIPKKMAMELFKPFVLAKLLGEGSTSKTMRKVKKAIIEKEMPEAWEVLEEVIKGSVVLLNRAPTLHRMSIQAFEPKLVEGNAIQLHPVVCPPFNADFDGDQMAVHVPLSAAAQAEARFLMLSRYNIISPAHGKPISLPTQDIIIGSYYLTTVGKDFDSLKEEDIRWRFSSPEEAMLAYHLGYIKLHTPILIKVSIKGEEKRIKTTLGRVIFNSILPEDLRDYNRIFDKKQINALVYETFKRYGIDRAADLLDDVKDLGFHYATVSGLTLSLKDLKIPPERDEILKRTWEKVRIIEENYERGFLTEEQRKSEIIRLWMNVTEEITELTSKTLAEDPFNPIYMMVNSGARGNIDQVKQLAGIRGLMIKAYDPRSREIKSKIFKGQAIHEALTFDYPVDKNLREGVDILQFFISTYGARKGQVDTAMNTSFAGYLTRRLVDVAQSVTVTEPDCGTHEGIRAMDLIKDGTVVEKMNEFLFGRVLASDVLDPETKEVLKNPETGKEYTRNTMLTDDDANFLASYKKMVDVVKYDEIDITELSLPNMYAEIAEPVGEYKEGTELTWDVVKAARNEGKYRIKVKMYPVVGTVYANEQPLYDKKGERELLVYQEVINEVVAKLLEENGVEKVLVRPDIIVRSPLTCESEYGVCAACYGMDLSNHKIVNVGEAVGIVAAQSIGEPGTQLTMRTFHVGGVMGASDIVSGLTTVEKTFEPYAFLREEKSGGKKEIRKYYGSEAVLCEVDGFVKDIATDETGRTVIYIEDYAGGIHAYRIPKRAKVKVKKGQKVLRGDTLTTGAIVWWKLLELESEKGVLTAMNLLKIIKNAYVQQGVSIHDKHFEIIFRQMLSMALVIDPGDSDYLPDQLVPLVDIKRTNREILEGNARVEENRKWVIGKMLAKRVITETDDGELVELAQKGEEVTEELLKKFIEAGIKEIDVVEKDRVVTYQILPKEPIKYKRRLLSLKKAALNYPGWLSAAAFEETAWVLTAAAIEGKVDPLIGLKENVIVGQLIPAGTGLDVFAGIQVEETPRAAAEEKLA</sequence>
<organism>
    <name type="scientific">Thermotoga neapolitana (strain ATCC 49049 / DSM 4359 / NBRC 107923 / NS-E)</name>
    <dbReference type="NCBI Taxonomy" id="309803"/>
    <lineage>
        <taxon>Bacteria</taxon>
        <taxon>Thermotogati</taxon>
        <taxon>Thermotogota</taxon>
        <taxon>Thermotogae</taxon>
        <taxon>Thermotogales</taxon>
        <taxon>Thermotogaceae</taxon>
        <taxon>Thermotoga</taxon>
    </lineage>
</organism>
<gene>
    <name evidence="1" type="primary">rpoC</name>
    <name type="ordered locus">CTN_0214</name>
</gene>
<protein>
    <recommendedName>
        <fullName evidence="1">DNA-directed RNA polymerase subunit beta'</fullName>
        <shortName evidence="1">RNAP subunit beta'</shortName>
        <ecNumber evidence="1">2.7.7.6</ecNumber>
    </recommendedName>
    <alternativeName>
        <fullName evidence="1">RNA polymerase subunit beta'</fullName>
    </alternativeName>
    <alternativeName>
        <fullName evidence="1">Transcriptase subunit beta'</fullName>
    </alternativeName>
</protein>
<name>RPOC_THENN</name>
<dbReference type="EC" id="2.7.7.6" evidence="1"/>
<dbReference type="EMBL" id="CP000916">
    <property type="protein sequence ID" value="ACM22390.1"/>
    <property type="molecule type" value="Genomic_DNA"/>
</dbReference>
<dbReference type="RefSeq" id="WP_012645100.1">
    <property type="nucleotide sequence ID" value="NC_011978.1"/>
</dbReference>
<dbReference type="SMR" id="B9KBJ4"/>
<dbReference type="STRING" id="309803.CTN_0214"/>
<dbReference type="KEGG" id="tna:CTN_0214"/>
<dbReference type="eggNOG" id="COG0086">
    <property type="taxonomic scope" value="Bacteria"/>
</dbReference>
<dbReference type="HOGENOM" id="CLU_000524_3_1_0"/>
<dbReference type="Proteomes" id="UP000000445">
    <property type="component" value="Chromosome"/>
</dbReference>
<dbReference type="GO" id="GO:0000428">
    <property type="term" value="C:DNA-directed RNA polymerase complex"/>
    <property type="evidence" value="ECO:0007669"/>
    <property type="project" value="UniProtKB-KW"/>
</dbReference>
<dbReference type="GO" id="GO:0003677">
    <property type="term" value="F:DNA binding"/>
    <property type="evidence" value="ECO:0007669"/>
    <property type="project" value="UniProtKB-UniRule"/>
</dbReference>
<dbReference type="GO" id="GO:0003899">
    <property type="term" value="F:DNA-directed RNA polymerase activity"/>
    <property type="evidence" value="ECO:0007669"/>
    <property type="project" value="UniProtKB-UniRule"/>
</dbReference>
<dbReference type="GO" id="GO:0000287">
    <property type="term" value="F:magnesium ion binding"/>
    <property type="evidence" value="ECO:0007669"/>
    <property type="project" value="UniProtKB-UniRule"/>
</dbReference>
<dbReference type="GO" id="GO:0008270">
    <property type="term" value="F:zinc ion binding"/>
    <property type="evidence" value="ECO:0007669"/>
    <property type="project" value="UniProtKB-UniRule"/>
</dbReference>
<dbReference type="GO" id="GO:0006351">
    <property type="term" value="P:DNA-templated transcription"/>
    <property type="evidence" value="ECO:0007669"/>
    <property type="project" value="UniProtKB-UniRule"/>
</dbReference>
<dbReference type="CDD" id="cd02655">
    <property type="entry name" value="RNAP_beta'_C"/>
    <property type="match status" value="1"/>
</dbReference>
<dbReference type="CDD" id="cd01609">
    <property type="entry name" value="RNAP_beta'_N"/>
    <property type="match status" value="1"/>
</dbReference>
<dbReference type="Gene3D" id="1.10.132.30">
    <property type="match status" value="1"/>
</dbReference>
<dbReference type="Gene3D" id="1.10.150.390">
    <property type="match status" value="1"/>
</dbReference>
<dbReference type="Gene3D" id="1.10.1790.20">
    <property type="match status" value="1"/>
</dbReference>
<dbReference type="Gene3D" id="1.10.40.90">
    <property type="match status" value="1"/>
</dbReference>
<dbReference type="Gene3D" id="2.40.40.20">
    <property type="match status" value="1"/>
</dbReference>
<dbReference type="Gene3D" id="2.40.50.100">
    <property type="match status" value="4"/>
</dbReference>
<dbReference type="Gene3D" id="4.10.860.120">
    <property type="entry name" value="RNA polymerase II, clamp domain"/>
    <property type="match status" value="1"/>
</dbReference>
<dbReference type="Gene3D" id="1.10.274.100">
    <property type="entry name" value="RNA polymerase Rpb1, domain 3"/>
    <property type="match status" value="2"/>
</dbReference>
<dbReference type="HAMAP" id="MF_01322">
    <property type="entry name" value="RNApol_bact_RpoC"/>
    <property type="match status" value="1"/>
</dbReference>
<dbReference type="InterPro" id="IPR045867">
    <property type="entry name" value="DNA-dir_RpoC_beta_prime"/>
</dbReference>
<dbReference type="InterPro" id="IPR012754">
    <property type="entry name" value="DNA-dir_RpoC_beta_prime_bact"/>
</dbReference>
<dbReference type="InterPro" id="IPR000722">
    <property type="entry name" value="RNA_pol_asu"/>
</dbReference>
<dbReference type="InterPro" id="IPR006592">
    <property type="entry name" value="RNA_pol_N"/>
</dbReference>
<dbReference type="InterPro" id="IPR007080">
    <property type="entry name" value="RNA_pol_Rpb1_1"/>
</dbReference>
<dbReference type="InterPro" id="IPR007066">
    <property type="entry name" value="RNA_pol_Rpb1_3"/>
</dbReference>
<dbReference type="InterPro" id="IPR042102">
    <property type="entry name" value="RNA_pol_Rpb1_3_sf"/>
</dbReference>
<dbReference type="InterPro" id="IPR007083">
    <property type="entry name" value="RNA_pol_Rpb1_4"/>
</dbReference>
<dbReference type="InterPro" id="IPR007081">
    <property type="entry name" value="RNA_pol_Rpb1_5"/>
</dbReference>
<dbReference type="InterPro" id="IPR044893">
    <property type="entry name" value="RNA_pol_Rpb1_clamp_domain"/>
</dbReference>
<dbReference type="InterPro" id="IPR038120">
    <property type="entry name" value="Rpb1_funnel_sf"/>
</dbReference>
<dbReference type="PANTHER" id="PTHR19376">
    <property type="entry name" value="DNA-DIRECTED RNA POLYMERASE"/>
    <property type="match status" value="1"/>
</dbReference>
<dbReference type="PANTHER" id="PTHR19376:SF54">
    <property type="entry name" value="DNA-DIRECTED RNA POLYMERASE SUBUNIT BETA"/>
    <property type="match status" value="1"/>
</dbReference>
<dbReference type="Pfam" id="PF04997">
    <property type="entry name" value="RNA_pol_Rpb1_1"/>
    <property type="match status" value="2"/>
</dbReference>
<dbReference type="Pfam" id="PF00623">
    <property type="entry name" value="RNA_pol_Rpb1_2"/>
    <property type="match status" value="2"/>
</dbReference>
<dbReference type="Pfam" id="PF04983">
    <property type="entry name" value="RNA_pol_Rpb1_3"/>
    <property type="match status" value="1"/>
</dbReference>
<dbReference type="Pfam" id="PF05000">
    <property type="entry name" value="RNA_pol_Rpb1_4"/>
    <property type="match status" value="1"/>
</dbReference>
<dbReference type="Pfam" id="PF04998">
    <property type="entry name" value="RNA_pol_Rpb1_5"/>
    <property type="match status" value="1"/>
</dbReference>
<dbReference type="SMART" id="SM00663">
    <property type="entry name" value="RPOLA_N"/>
    <property type="match status" value="1"/>
</dbReference>
<dbReference type="SUPFAM" id="SSF64484">
    <property type="entry name" value="beta and beta-prime subunits of DNA dependent RNA-polymerase"/>
    <property type="match status" value="1"/>
</dbReference>
<reference key="1">
    <citation type="submission" date="2007-11" db="EMBL/GenBank/DDBJ databases">
        <title>The genome sequence of the hyperthermophilic bacterium Thermotoga neapolitana.</title>
        <authorList>
            <person name="Lim S.K."/>
            <person name="Kim J.S."/>
            <person name="Cha S.H."/>
            <person name="Park B.C."/>
            <person name="Lee D.S."/>
            <person name="Tae H.S."/>
            <person name="Kim S.-J."/>
            <person name="Kim J.J."/>
            <person name="Park K.J."/>
            <person name="Lee S.Y."/>
        </authorList>
    </citation>
    <scope>NUCLEOTIDE SEQUENCE [LARGE SCALE GENOMIC DNA]</scope>
    <source>
        <strain>ATCC 49049 / DSM 4359 / NBRC 107923 / NS-E</strain>
    </source>
</reference>
<feature type="chain" id="PRO_1000165857" description="DNA-directed RNA polymerase subunit beta'">
    <location>
        <begin position="1"/>
        <end position="1690"/>
    </location>
</feature>
<feature type="binding site" evidence="1">
    <location>
        <position position="63"/>
    </location>
    <ligand>
        <name>Zn(2+)</name>
        <dbReference type="ChEBI" id="CHEBI:29105"/>
        <label>1</label>
    </ligand>
</feature>
<feature type="binding site" evidence="1">
    <location>
        <position position="65"/>
    </location>
    <ligand>
        <name>Zn(2+)</name>
        <dbReference type="ChEBI" id="CHEBI:29105"/>
        <label>1</label>
    </ligand>
</feature>
<feature type="binding site" evidence="1">
    <location>
        <position position="78"/>
    </location>
    <ligand>
        <name>Zn(2+)</name>
        <dbReference type="ChEBI" id="CHEBI:29105"/>
        <label>1</label>
    </ligand>
</feature>
<feature type="binding site" evidence="1">
    <location>
        <position position="81"/>
    </location>
    <ligand>
        <name>Zn(2+)</name>
        <dbReference type="ChEBI" id="CHEBI:29105"/>
        <label>1</label>
    </ligand>
</feature>
<feature type="binding site" evidence="1">
    <location>
        <position position="753"/>
    </location>
    <ligand>
        <name>Mg(2+)</name>
        <dbReference type="ChEBI" id="CHEBI:18420"/>
    </ligand>
</feature>
<feature type="binding site" evidence="1">
    <location>
        <position position="755"/>
    </location>
    <ligand>
        <name>Mg(2+)</name>
        <dbReference type="ChEBI" id="CHEBI:18420"/>
    </ligand>
</feature>
<feature type="binding site" evidence="1">
    <location>
        <position position="757"/>
    </location>
    <ligand>
        <name>Mg(2+)</name>
        <dbReference type="ChEBI" id="CHEBI:18420"/>
    </ligand>
</feature>
<feature type="binding site" evidence="1">
    <location>
        <position position="1107"/>
    </location>
    <ligand>
        <name>Zn(2+)</name>
        <dbReference type="ChEBI" id="CHEBI:29105"/>
        <label>2</label>
    </ligand>
</feature>
<feature type="binding site" evidence="1">
    <location>
        <position position="1295"/>
    </location>
    <ligand>
        <name>Zn(2+)</name>
        <dbReference type="ChEBI" id="CHEBI:29105"/>
        <label>2</label>
    </ligand>
</feature>
<feature type="binding site" evidence="1">
    <location>
        <position position="1302"/>
    </location>
    <ligand>
        <name>Zn(2+)</name>
        <dbReference type="ChEBI" id="CHEBI:29105"/>
        <label>2</label>
    </ligand>
</feature>
<feature type="binding site" evidence="1">
    <location>
        <position position="1305"/>
    </location>
    <ligand>
        <name>Zn(2+)</name>
        <dbReference type="ChEBI" id="CHEBI:29105"/>
        <label>2</label>
    </ligand>
</feature>
<proteinExistence type="inferred from homology"/>
<keyword id="KW-0240">DNA-directed RNA polymerase</keyword>
<keyword id="KW-0460">Magnesium</keyword>
<keyword id="KW-0479">Metal-binding</keyword>
<keyword id="KW-0548">Nucleotidyltransferase</keyword>
<keyword id="KW-0804">Transcription</keyword>
<keyword id="KW-0808">Transferase</keyword>
<keyword id="KW-0862">Zinc</keyword>
<accession>B9KBJ4</accession>
<evidence type="ECO:0000255" key="1">
    <source>
        <dbReference type="HAMAP-Rule" id="MF_01322"/>
    </source>
</evidence>
<comment type="function">
    <text evidence="1">DNA-dependent RNA polymerase catalyzes the transcription of DNA into RNA using the four ribonucleoside triphosphates as substrates.</text>
</comment>
<comment type="catalytic activity">
    <reaction evidence="1">
        <text>RNA(n) + a ribonucleoside 5'-triphosphate = RNA(n+1) + diphosphate</text>
        <dbReference type="Rhea" id="RHEA:21248"/>
        <dbReference type="Rhea" id="RHEA-COMP:14527"/>
        <dbReference type="Rhea" id="RHEA-COMP:17342"/>
        <dbReference type="ChEBI" id="CHEBI:33019"/>
        <dbReference type="ChEBI" id="CHEBI:61557"/>
        <dbReference type="ChEBI" id="CHEBI:140395"/>
        <dbReference type="EC" id="2.7.7.6"/>
    </reaction>
</comment>
<comment type="cofactor">
    <cofactor evidence="1">
        <name>Mg(2+)</name>
        <dbReference type="ChEBI" id="CHEBI:18420"/>
    </cofactor>
    <text evidence="1">Binds 1 Mg(2+) ion per subunit.</text>
</comment>
<comment type="cofactor">
    <cofactor evidence="1">
        <name>Zn(2+)</name>
        <dbReference type="ChEBI" id="CHEBI:29105"/>
    </cofactor>
    <text evidence="1">Binds 2 Zn(2+) ions per subunit.</text>
</comment>
<comment type="subunit">
    <text evidence="1">The RNAP catalytic core consists of 2 alpha, 1 beta, 1 beta' and 1 omega subunit. When a sigma factor is associated with the core the holoenzyme is formed, which can initiate transcription.</text>
</comment>
<comment type="similarity">
    <text evidence="1">Belongs to the RNA polymerase beta' chain family.</text>
</comment>